<comment type="function">
    <text evidence="1">Assembles around the rod to form the L-ring and probably protects the motor/basal body from shearing forces during rotation.</text>
</comment>
<comment type="subunit">
    <text evidence="1">The basal body constitutes a major portion of the flagellar organelle and consists of four rings (L,P,S, and M) mounted on a central rod.</text>
</comment>
<comment type="subcellular location">
    <subcellularLocation>
        <location evidence="1">Cell outer membrane</location>
        <topology evidence="1">Lipid-anchor</topology>
    </subcellularLocation>
    <subcellularLocation>
        <location evidence="1">Bacterial flagellum basal body</location>
    </subcellularLocation>
</comment>
<comment type="similarity">
    <text evidence="4">Belongs to the FlgH family.</text>
</comment>
<accession>Q9I4P6</accession>
<protein>
    <recommendedName>
        <fullName>Flagellar L-ring protein</fullName>
    </recommendedName>
    <alternativeName>
        <fullName>Basal body L-ring protein</fullName>
    </alternativeName>
</protein>
<feature type="signal peptide" evidence="2">
    <location>
        <begin position="1"/>
        <end position="18"/>
    </location>
</feature>
<feature type="chain" id="PRO_0000009459" description="Flagellar L-ring protein">
    <location>
        <begin position="19"/>
        <end position="231"/>
    </location>
</feature>
<feature type="region of interest" description="Disordered" evidence="3">
    <location>
        <begin position="118"/>
        <end position="141"/>
    </location>
</feature>
<feature type="lipid moiety-binding region" description="N-palmitoyl cysteine" evidence="2">
    <location>
        <position position="19"/>
    </location>
</feature>
<feature type="lipid moiety-binding region" description="S-diacylglycerol cysteine" evidence="2">
    <location>
        <position position="19"/>
    </location>
</feature>
<name>FLGH_PSEAE</name>
<keyword id="KW-0975">Bacterial flagellum</keyword>
<keyword id="KW-0998">Cell outer membrane</keyword>
<keyword id="KW-0449">Lipoprotein</keyword>
<keyword id="KW-0472">Membrane</keyword>
<keyword id="KW-0564">Palmitate</keyword>
<keyword id="KW-1185">Reference proteome</keyword>
<keyword id="KW-0732">Signal</keyword>
<sequence>MNRLMIVSLLGIATALGGCVNPPPKPNDPYYAPVLPRTPLPAAQNNGAIYQAGFEQNLYDDRKAFRVGDIITITLNEKTQASKKANSDIQKDSKTKMGLTSLFGSGMTTNNPIGGGDLSLSAEYGGSRDAKGDSQAGQSNSLTGSITVTVAEVLPNGILSVRGEKWMTLNTGNELVRIAGLVRADDIATDNTVSSTRVADARITYSGTGAFADASQPGWLDRFFLSPLWPF</sequence>
<dbReference type="EMBL" id="AE004091">
    <property type="protein sequence ID" value="AAG04472.1"/>
    <property type="molecule type" value="Genomic_DNA"/>
</dbReference>
<dbReference type="PIR" id="A83511">
    <property type="entry name" value="A83511"/>
</dbReference>
<dbReference type="RefSeq" id="NP_249774.1">
    <property type="nucleotide sequence ID" value="NC_002516.2"/>
</dbReference>
<dbReference type="RefSeq" id="WP_003082166.1">
    <property type="nucleotide sequence ID" value="NZ_QZGE01000006.1"/>
</dbReference>
<dbReference type="SMR" id="Q9I4P6"/>
<dbReference type="FunCoup" id="Q9I4P6">
    <property type="interactions" value="109"/>
</dbReference>
<dbReference type="STRING" id="208964.PA1083"/>
<dbReference type="PaxDb" id="208964-PA1083"/>
<dbReference type="DNASU" id="879458"/>
<dbReference type="GeneID" id="879458"/>
<dbReference type="KEGG" id="pae:PA1083"/>
<dbReference type="PATRIC" id="fig|208964.12.peg.1122"/>
<dbReference type="PseudoCAP" id="PA1083"/>
<dbReference type="HOGENOM" id="CLU_069313_0_2_6"/>
<dbReference type="InParanoid" id="Q9I4P6"/>
<dbReference type="OrthoDB" id="9789463at2"/>
<dbReference type="PhylomeDB" id="Q9I4P6"/>
<dbReference type="BioCyc" id="PAER208964:G1FZ6-1106-MONOMER"/>
<dbReference type="Proteomes" id="UP000002438">
    <property type="component" value="Chromosome"/>
</dbReference>
<dbReference type="GO" id="GO:0009427">
    <property type="term" value="C:bacterial-type flagellum basal body, distal rod, L ring"/>
    <property type="evidence" value="ECO:0007669"/>
    <property type="project" value="InterPro"/>
</dbReference>
<dbReference type="GO" id="GO:0009279">
    <property type="term" value="C:cell outer membrane"/>
    <property type="evidence" value="ECO:0007669"/>
    <property type="project" value="UniProtKB-SubCell"/>
</dbReference>
<dbReference type="GO" id="GO:0003774">
    <property type="term" value="F:cytoskeletal motor activity"/>
    <property type="evidence" value="ECO:0007669"/>
    <property type="project" value="InterPro"/>
</dbReference>
<dbReference type="GO" id="GO:0071973">
    <property type="term" value="P:bacterial-type flagellum-dependent cell motility"/>
    <property type="evidence" value="ECO:0007669"/>
    <property type="project" value="InterPro"/>
</dbReference>
<dbReference type="HAMAP" id="MF_00415">
    <property type="entry name" value="FlgH"/>
    <property type="match status" value="1"/>
</dbReference>
<dbReference type="InterPro" id="IPR000527">
    <property type="entry name" value="Flag_Lring"/>
</dbReference>
<dbReference type="NCBIfam" id="NF001304">
    <property type="entry name" value="PRK00249.1-4"/>
    <property type="match status" value="1"/>
</dbReference>
<dbReference type="PANTHER" id="PTHR34933">
    <property type="entry name" value="FLAGELLAR L-RING PROTEIN"/>
    <property type="match status" value="1"/>
</dbReference>
<dbReference type="PANTHER" id="PTHR34933:SF1">
    <property type="entry name" value="FLAGELLAR L-RING PROTEIN"/>
    <property type="match status" value="1"/>
</dbReference>
<dbReference type="Pfam" id="PF02107">
    <property type="entry name" value="FlgH"/>
    <property type="match status" value="1"/>
</dbReference>
<dbReference type="PRINTS" id="PR01008">
    <property type="entry name" value="FLGLRINGFLGH"/>
</dbReference>
<dbReference type="PROSITE" id="PS51257">
    <property type="entry name" value="PROKAR_LIPOPROTEIN"/>
    <property type="match status" value="1"/>
</dbReference>
<evidence type="ECO:0000250" key="1"/>
<evidence type="ECO:0000255" key="2"/>
<evidence type="ECO:0000256" key="3">
    <source>
        <dbReference type="SAM" id="MobiDB-lite"/>
    </source>
</evidence>
<evidence type="ECO:0000305" key="4"/>
<proteinExistence type="inferred from homology"/>
<gene>
    <name type="primary">flgH</name>
    <name type="ordered locus">PA1083</name>
</gene>
<organism>
    <name type="scientific">Pseudomonas aeruginosa (strain ATCC 15692 / DSM 22644 / CIP 104116 / JCM 14847 / LMG 12228 / 1C / PRS 101 / PAO1)</name>
    <dbReference type="NCBI Taxonomy" id="208964"/>
    <lineage>
        <taxon>Bacteria</taxon>
        <taxon>Pseudomonadati</taxon>
        <taxon>Pseudomonadota</taxon>
        <taxon>Gammaproteobacteria</taxon>
        <taxon>Pseudomonadales</taxon>
        <taxon>Pseudomonadaceae</taxon>
        <taxon>Pseudomonas</taxon>
    </lineage>
</organism>
<reference key="1">
    <citation type="journal article" date="2000" name="Nature">
        <title>Complete genome sequence of Pseudomonas aeruginosa PAO1, an opportunistic pathogen.</title>
        <authorList>
            <person name="Stover C.K."/>
            <person name="Pham X.-Q.T."/>
            <person name="Erwin A.L."/>
            <person name="Mizoguchi S.D."/>
            <person name="Warrener P."/>
            <person name="Hickey M.J."/>
            <person name="Brinkman F.S.L."/>
            <person name="Hufnagle W.O."/>
            <person name="Kowalik D.J."/>
            <person name="Lagrou M."/>
            <person name="Garber R.L."/>
            <person name="Goltry L."/>
            <person name="Tolentino E."/>
            <person name="Westbrock-Wadman S."/>
            <person name="Yuan Y."/>
            <person name="Brody L.L."/>
            <person name="Coulter S.N."/>
            <person name="Folger K.R."/>
            <person name="Kas A."/>
            <person name="Larbig K."/>
            <person name="Lim R.M."/>
            <person name="Smith K.A."/>
            <person name="Spencer D.H."/>
            <person name="Wong G.K.-S."/>
            <person name="Wu Z."/>
            <person name="Paulsen I.T."/>
            <person name="Reizer J."/>
            <person name="Saier M.H. Jr."/>
            <person name="Hancock R.E.W."/>
            <person name="Lory S."/>
            <person name="Olson M.V."/>
        </authorList>
    </citation>
    <scope>NUCLEOTIDE SEQUENCE [LARGE SCALE GENOMIC DNA]</scope>
    <source>
        <strain>ATCC 15692 / DSM 22644 / CIP 104116 / JCM 14847 / LMG 12228 / 1C / PRS 101 / PAO1</strain>
    </source>
</reference>